<protein>
    <recommendedName>
        <fullName evidence="1">Ribonuclease PH</fullName>
        <shortName evidence="1">RNase PH</shortName>
        <ecNumber evidence="1">2.7.7.56</ecNumber>
    </recommendedName>
    <alternativeName>
        <fullName evidence="1">tRNA nucleotidyltransferase</fullName>
    </alternativeName>
</protein>
<feature type="chain" id="PRO_0000139917" description="Ribonuclease PH">
    <location>
        <begin position="1"/>
        <end position="244"/>
    </location>
</feature>
<feature type="binding site" evidence="1">
    <location>
        <position position="86"/>
    </location>
    <ligand>
        <name>phosphate</name>
        <dbReference type="ChEBI" id="CHEBI:43474"/>
        <note>substrate</note>
    </ligand>
</feature>
<feature type="binding site" evidence="1">
    <location>
        <begin position="124"/>
        <end position="126"/>
    </location>
    <ligand>
        <name>phosphate</name>
        <dbReference type="ChEBI" id="CHEBI:43474"/>
        <note>substrate</note>
    </ligand>
</feature>
<organism>
    <name type="scientific">Oceanobacillus iheyensis (strain DSM 14371 / CIP 107618 / JCM 11309 / KCTC 3954 / HTE831)</name>
    <dbReference type="NCBI Taxonomy" id="221109"/>
    <lineage>
        <taxon>Bacteria</taxon>
        <taxon>Bacillati</taxon>
        <taxon>Bacillota</taxon>
        <taxon>Bacilli</taxon>
        <taxon>Bacillales</taxon>
        <taxon>Bacillaceae</taxon>
        <taxon>Oceanobacillus</taxon>
    </lineage>
</organism>
<sequence>MRNDQREVNQLRNINITTNYISHPEGSVLIEMGNTKVICNASIEDRVPPFMRGQGKGWITAEYAMLPRATAQRNIRESSKGKVSGRTMEIQRLIGRALRSVVDLDQIGERTVWIDCDVIQADGGTRTASITGAFVAMSLAFAKLVEAKTLKKTPIQDYLAAISVGVLTNGTEILDLNYEEDSEAAVDMNIVMTGEGEFVEIQGTGEEATFTPNQLQNMLKLGEEGIQQLVKIQKELLADKLLID</sequence>
<proteinExistence type="inferred from homology"/>
<name>RNPH_OCEIH</name>
<reference key="1">
    <citation type="journal article" date="2002" name="Nucleic Acids Res.">
        <title>Genome sequence of Oceanobacillus iheyensis isolated from the Iheya Ridge and its unexpected adaptive capabilities to extreme environments.</title>
        <authorList>
            <person name="Takami H."/>
            <person name="Takaki Y."/>
            <person name="Uchiyama I."/>
        </authorList>
    </citation>
    <scope>NUCLEOTIDE SEQUENCE [LARGE SCALE GENOMIC DNA]</scope>
    <source>
        <strain>DSM 14371 / CIP 107618 / JCM 11309 / KCTC 3954 / HTE831</strain>
    </source>
</reference>
<accession>Q8EPJ5</accession>
<gene>
    <name evidence="1" type="primary">rph</name>
    <name type="ordered locus">OB2106</name>
</gene>
<keyword id="KW-0548">Nucleotidyltransferase</keyword>
<keyword id="KW-1185">Reference proteome</keyword>
<keyword id="KW-0694">RNA-binding</keyword>
<keyword id="KW-0698">rRNA processing</keyword>
<keyword id="KW-0808">Transferase</keyword>
<keyword id="KW-0819">tRNA processing</keyword>
<keyword id="KW-0820">tRNA-binding</keyword>
<dbReference type="EC" id="2.7.7.56" evidence="1"/>
<dbReference type="EMBL" id="BA000028">
    <property type="protein sequence ID" value="BAC14062.1"/>
    <property type="molecule type" value="Genomic_DNA"/>
</dbReference>
<dbReference type="RefSeq" id="WP_011066501.1">
    <property type="nucleotide sequence ID" value="NC_004193.1"/>
</dbReference>
<dbReference type="SMR" id="Q8EPJ5"/>
<dbReference type="STRING" id="221109.gene:10734354"/>
<dbReference type="KEGG" id="oih:OB2106"/>
<dbReference type="eggNOG" id="COG0689">
    <property type="taxonomic scope" value="Bacteria"/>
</dbReference>
<dbReference type="HOGENOM" id="CLU_050858_0_0_9"/>
<dbReference type="OrthoDB" id="9802265at2"/>
<dbReference type="PhylomeDB" id="Q8EPJ5"/>
<dbReference type="Proteomes" id="UP000000822">
    <property type="component" value="Chromosome"/>
</dbReference>
<dbReference type="GO" id="GO:0000175">
    <property type="term" value="F:3'-5'-RNA exonuclease activity"/>
    <property type="evidence" value="ECO:0007669"/>
    <property type="project" value="UniProtKB-UniRule"/>
</dbReference>
<dbReference type="GO" id="GO:0000049">
    <property type="term" value="F:tRNA binding"/>
    <property type="evidence" value="ECO:0007669"/>
    <property type="project" value="UniProtKB-UniRule"/>
</dbReference>
<dbReference type="GO" id="GO:0009022">
    <property type="term" value="F:tRNA nucleotidyltransferase activity"/>
    <property type="evidence" value="ECO:0007669"/>
    <property type="project" value="UniProtKB-UniRule"/>
</dbReference>
<dbReference type="GO" id="GO:0016075">
    <property type="term" value="P:rRNA catabolic process"/>
    <property type="evidence" value="ECO:0007669"/>
    <property type="project" value="UniProtKB-UniRule"/>
</dbReference>
<dbReference type="GO" id="GO:0006364">
    <property type="term" value="P:rRNA processing"/>
    <property type="evidence" value="ECO:0007669"/>
    <property type="project" value="UniProtKB-KW"/>
</dbReference>
<dbReference type="GO" id="GO:0008033">
    <property type="term" value="P:tRNA processing"/>
    <property type="evidence" value="ECO:0007669"/>
    <property type="project" value="UniProtKB-UniRule"/>
</dbReference>
<dbReference type="CDD" id="cd11362">
    <property type="entry name" value="RNase_PH_bact"/>
    <property type="match status" value="1"/>
</dbReference>
<dbReference type="FunFam" id="3.30.230.70:FF:000003">
    <property type="entry name" value="Ribonuclease PH"/>
    <property type="match status" value="1"/>
</dbReference>
<dbReference type="Gene3D" id="3.30.230.70">
    <property type="entry name" value="GHMP Kinase, N-terminal domain"/>
    <property type="match status" value="1"/>
</dbReference>
<dbReference type="HAMAP" id="MF_00564">
    <property type="entry name" value="RNase_PH"/>
    <property type="match status" value="1"/>
</dbReference>
<dbReference type="InterPro" id="IPR001247">
    <property type="entry name" value="ExoRNase_PH_dom1"/>
</dbReference>
<dbReference type="InterPro" id="IPR015847">
    <property type="entry name" value="ExoRNase_PH_dom2"/>
</dbReference>
<dbReference type="InterPro" id="IPR036345">
    <property type="entry name" value="ExoRNase_PH_dom2_sf"/>
</dbReference>
<dbReference type="InterPro" id="IPR027408">
    <property type="entry name" value="PNPase/RNase_PH_dom_sf"/>
</dbReference>
<dbReference type="InterPro" id="IPR020568">
    <property type="entry name" value="Ribosomal_Su5_D2-typ_SF"/>
</dbReference>
<dbReference type="InterPro" id="IPR050080">
    <property type="entry name" value="RNase_PH"/>
</dbReference>
<dbReference type="InterPro" id="IPR002381">
    <property type="entry name" value="RNase_PH_bac-type"/>
</dbReference>
<dbReference type="InterPro" id="IPR018336">
    <property type="entry name" value="RNase_PH_CS"/>
</dbReference>
<dbReference type="NCBIfam" id="TIGR01966">
    <property type="entry name" value="RNasePH"/>
    <property type="match status" value="1"/>
</dbReference>
<dbReference type="PANTHER" id="PTHR11953">
    <property type="entry name" value="EXOSOME COMPLEX COMPONENT"/>
    <property type="match status" value="1"/>
</dbReference>
<dbReference type="PANTHER" id="PTHR11953:SF0">
    <property type="entry name" value="EXOSOME COMPLEX COMPONENT RRP41"/>
    <property type="match status" value="1"/>
</dbReference>
<dbReference type="Pfam" id="PF01138">
    <property type="entry name" value="RNase_PH"/>
    <property type="match status" value="1"/>
</dbReference>
<dbReference type="Pfam" id="PF03725">
    <property type="entry name" value="RNase_PH_C"/>
    <property type="match status" value="1"/>
</dbReference>
<dbReference type="SUPFAM" id="SSF55666">
    <property type="entry name" value="Ribonuclease PH domain 2-like"/>
    <property type="match status" value="1"/>
</dbReference>
<dbReference type="SUPFAM" id="SSF54211">
    <property type="entry name" value="Ribosomal protein S5 domain 2-like"/>
    <property type="match status" value="1"/>
</dbReference>
<dbReference type="PROSITE" id="PS01277">
    <property type="entry name" value="RIBONUCLEASE_PH"/>
    <property type="match status" value="1"/>
</dbReference>
<evidence type="ECO:0000255" key="1">
    <source>
        <dbReference type="HAMAP-Rule" id="MF_00564"/>
    </source>
</evidence>
<comment type="function">
    <text evidence="1">Phosphorolytic 3'-5' exoribonuclease that plays an important role in tRNA 3'-end maturation. Removes nucleotide residues following the 3'-CCA terminus of tRNAs; can also add nucleotides to the ends of RNA molecules by using nucleoside diphosphates as substrates, but this may not be physiologically important. Probably plays a role in initiation of 16S rRNA degradation (leading to ribosome degradation) during starvation.</text>
</comment>
<comment type="catalytic activity">
    <reaction evidence="1">
        <text>tRNA(n+1) + phosphate = tRNA(n) + a ribonucleoside 5'-diphosphate</text>
        <dbReference type="Rhea" id="RHEA:10628"/>
        <dbReference type="Rhea" id="RHEA-COMP:17343"/>
        <dbReference type="Rhea" id="RHEA-COMP:17344"/>
        <dbReference type="ChEBI" id="CHEBI:43474"/>
        <dbReference type="ChEBI" id="CHEBI:57930"/>
        <dbReference type="ChEBI" id="CHEBI:173114"/>
        <dbReference type="EC" id="2.7.7.56"/>
    </reaction>
</comment>
<comment type="subunit">
    <text evidence="1">Homohexameric ring arranged as a trimer of dimers.</text>
</comment>
<comment type="similarity">
    <text evidence="1">Belongs to the RNase PH family.</text>
</comment>